<gene>
    <name evidence="2" type="primary">nuoB</name>
    <name type="ordered locus">BamMC406_2165</name>
</gene>
<keyword id="KW-0004">4Fe-4S</keyword>
<keyword id="KW-0997">Cell inner membrane</keyword>
<keyword id="KW-1003">Cell membrane</keyword>
<keyword id="KW-0408">Iron</keyword>
<keyword id="KW-0411">Iron-sulfur</keyword>
<keyword id="KW-0472">Membrane</keyword>
<keyword id="KW-0479">Metal-binding</keyword>
<keyword id="KW-0520">NAD</keyword>
<keyword id="KW-0874">Quinone</keyword>
<keyword id="KW-1278">Translocase</keyword>
<keyword id="KW-0813">Transport</keyword>
<keyword id="KW-0830">Ubiquinone</keyword>
<reference key="1">
    <citation type="submission" date="2008-04" db="EMBL/GenBank/DDBJ databases">
        <title>Complete sequence of chromosome 1 of Burkholderia ambifaria MC40-6.</title>
        <authorList>
            <person name="Copeland A."/>
            <person name="Lucas S."/>
            <person name="Lapidus A."/>
            <person name="Glavina del Rio T."/>
            <person name="Dalin E."/>
            <person name="Tice H."/>
            <person name="Pitluck S."/>
            <person name="Chain P."/>
            <person name="Malfatti S."/>
            <person name="Shin M."/>
            <person name="Vergez L."/>
            <person name="Lang D."/>
            <person name="Schmutz J."/>
            <person name="Larimer F."/>
            <person name="Land M."/>
            <person name="Hauser L."/>
            <person name="Kyrpides N."/>
            <person name="Lykidis A."/>
            <person name="Ramette A."/>
            <person name="Konstantinidis K."/>
            <person name="Tiedje J."/>
            <person name="Richardson P."/>
        </authorList>
    </citation>
    <scope>NUCLEOTIDE SEQUENCE [LARGE SCALE GENOMIC DNA]</scope>
    <source>
        <strain>MC40-6</strain>
    </source>
</reference>
<comment type="function">
    <text evidence="1">NDH-1 shuttles electrons from NADH, via FMN and iron-sulfur (Fe-S) centers, to quinones in the respiratory chain. Couples the redox reaction to proton translocation (for every two electrons transferred, four hydrogen ions are translocated across the cytoplasmic membrane), and thus conserves the redox energy in a proton gradient (By similarity).</text>
</comment>
<comment type="catalytic activity">
    <reaction evidence="2">
        <text>a quinone + NADH + 5 H(+)(in) = a quinol + NAD(+) + 4 H(+)(out)</text>
        <dbReference type="Rhea" id="RHEA:57888"/>
        <dbReference type="ChEBI" id="CHEBI:15378"/>
        <dbReference type="ChEBI" id="CHEBI:24646"/>
        <dbReference type="ChEBI" id="CHEBI:57540"/>
        <dbReference type="ChEBI" id="CHEBI:57945"/>
        <dbReference type="ChEBI" id="CHEBI:132124"/>
    </reaction>
</comment>
<comment type="cofactor">
    <cofactor evidence="2">
        <name>[4Fe-4S] cluster</name>
        <dbReference type="ChEBI" id="CHEBI:49883"/>
    </cofactor>
    <text evidence="2">Binds 1 [4Fe-4S] cluster.</text>
</comment>
<comment type="subunit">
    <text evidence="2">NDH-1 is composed of 14 different subunits. Subunits NuoB, C, D, E, F, and G constitute the peripheral sector of the complex.</text>
</comment>
<comment type="subcellular location">
    <subcellularLocation>
        <location evidence="2">Cell inner membrane</location>
        <topology evidence="2">Peripheral membrane protein</topology>
        <orientation evidence="2">Cytoplasmic side</orientation>
    </subcellularLocation>
</comment>
<comment type="similarity">
    <text evidence="2">Belongs to the complex I 20 kDa subunit family.</text>
</comment>
<evidence type="ECO:0000250" key="1"/>
<evidence type="ECO:0000255" key="2">
    <source>
        <dbReference type="HAMAP-Rule" id="MF_01356"/>
    </source>
</evidence>
<accession>B1YTQ6</accession>
<feature type="chain" id="PRO_0000358364" description="NADH-quinone oxidoreductase subunit B">
    <location>
        <begin position="1"/>
        <end position="159"/>
    </location>
</feature>
<feature type="binding site" evidence="2">
    <location>
        <position position="37"/>
    </location>
    <ligand>
        <name>[4Fe-4S] cluster</name>
        <dbReference type="ChEBI" id="CHEBI:49883"/>
    </ligand>
</feature>
<feature type="binding site" evidence="2">
    <location>
        <position position="38"/>
    </location>
    <ligand>
        <name>[4Fe-4S] cluster</name>
        <dbReference type="ChEBI" id="CHEBI:49883"/>
    </ligand>
</feature>
<feature type="binding site" evidence="2">
    <location>
        <position position="102"/>
    </location>
    <ligand>
        <name>[4Fe-4S] cluster</name>
        <dbReference type="ChEBI" id="CHEBI:49883"/>
    </ligand>
</feature>
<feature type="binding site" evidence="2">
    <location>
        <position position="132"/>
    </location>
    <ligand>
        <name>[4Fe-4S] cluster</name>
        <dbReference type="ChEBI" id="CHEBI:49883"/>
    </ligand>
</feature>
<proteinExistence type="inferred from homology"/>
<dbReference type="EC" id="7.1.1.-" evidence="2"/>
<dbReference type="EMBL" id="CP001025">
    <property type="protein sequence ID" value="ACB64644.1"/>
    <property type="molecule type" value="Genomic_DNA"/>
</dbReference>
<dbReference type="RefSeq" id="WP_006398799.1">
    <property type="nucleotide sequence ID" value="NC_010551.1"/>
</dbReference>
<dbReference type="SMR" id="B1YTQ6"/>
<dbReference type="KEGG" id="bac:BamMC406_2165"/>
<dbReference type="HOGENOM" id="CLU_055737_7_3_4"/>
<dbReference type="OrthoDB" id="9786737at2"/>
<dbReference type="Proteomes" id="UP000001680">
    <property type="component" value="Chromosome 1"/>
</dbReference>
<dbReference type="GO" id="GO:0005886">
    <property type="term" value="C:plasma membrane"/>
    <property type="evidence" value="ECO:0007669"/>
    <property type="project" value="UniProtKB-SubCell"/>
</dbReference>
<dbReference type="GO" id="GO:0045271">
    <property type="term" value="C:respiratory chain complex I"/>
    <property type="evidence" value="ECO:0007669"/>
    <property type="project" value="TreeGrafter"/>
</dbReference>
<dbReference type="GO" id="GO:0051539">
    <property type="term" value="F:4 iron, 4 sulfur cluster binding"/>
    <property type="evidence" value="ECO:0007669"/>
    <property type="project" value="UniProtKB-KW"/>
</dbReference>
<dbReference type="GO" id="GO:0005506">
    <property type="term" value="F:iron ion binding"/>
    <property type="evidence" value="ECO:0007669"/>
    <property type="project" value="UniProtKB-UniRule"/>
</dbReference>
<dbReference type="GO" id="GO:0008137">
    <property type="term" value="F:NADH dehydrogenase (ubiquinone) activity"/>
    <property type="evidence" value="ECO:0007669"/>
    <property type="project" value="InterPro"/>
</dbReference>
<dbReference type="GO" id="GO:0050136">
    <property type="term" value="F:NADH:ubiquinone reductase (non-electrogenic) activity"/>
    <property type="evidence" value="ECO:0007669"/>
    <property type="project" value="UniProtKB-UniRule"/>
</dbReference>
<dbReference type="GO" id="GO:0048038">
    <property type="term" value="F:quinone binding"/>
    <property type="evidence" value="ECO:0007669"/>
    <property type="project" value="UniProtKB-KW"/>
</dbReference>
<dbReference type="GO" id="GO:0009060">
    <property type="term" value="P:aerobic respiration"/>
    <property type="evidence" value="ECO:0007669"/>
    <property type="project" value="TreeGrafter"/>
</dbReference>
<dbReference type="GO" id="GO:0015990">
    <property type="term" value="P:electron transport coupled proton transport"/>
    <property type="evidence" value="ECO:0007669"/>
    <property type="project" value="TreeGrafter"/>
</dbReference>
<dbReference type="FunFam" id="3.40.50.12280:FF:000001">
    <property type="entry name" value="NADH-quinone oxidoreductase subunit B 2"/>
    <property type="match status" value="1"/>
</dbReference>
<dbReference type="Gene3D" id="3.40.50.12280">
    <property type="match status" value="1"/>
</dbReference>
<dbReference type="HAMAP" id="MF_01356">
    <property type="entry name" value="NDH1_NuoB"/>
    <property type="match status" value="1"/>
</dbReference>
<dbReference type="InterPro" id="IPR006137">
    <property type="entry name" value="NADH_UbQ_OxRdtase-like_20kDa"/>
</dbReference>
<dbReference type="InterPro" id="IPR006138">
    <property type="entry name" value="NADH_UQ_OxRdtase_20Kd_su"/>
</dbReference>
<dbReference type="NCBIfam" id="TIGR01957">
    <property type="entry name" value="nuoB_fam"/>
    <property type="match status" value="1"/>
</dbReference>
<dbReference type="NCBIfam" id="NF005012">
    <property type="entry name" value="PRK06411.1"/>
    <property type="match status" value="1"/>
</dbReference>
<dbReference type="PANTHER" id="PTHR11995">
    <property type="entry name" value="NADH DEHYDROGENASE"/>
    <property type="match status" value="1"/>
</dbReference>
<dbReference type="PANTHER" id="PTHR11995:SF14">
    <property type="entry name" value="NADH DEHYDROGENASE [UBIQUINONE] IRON-SULFUR PROTEIN 7, MITOCHONDRIAL"/>
    <property type="match status" value="1"/>
</dbReference>
<dbReference type="Pfam" id="PF01058">
    <property type="entry name" value="Oxidored_q6"/>
    <property type="match status" value="1"/>
</dbReference>
<dbReference type="SUPFAM" id="SSF56770">
    <property type="entry name" value="HydA/Nqo6-like"/>
    <property type="match status" value="1"/>
</dbReference>
<dbReference type="PROSITE" id="PS01150">
    <property type="entry name" value="COMPLEX1_20K"/>
    <property type="match status" value="1"/>
</dbReference>
<name>NUOB_BURA4</name>
<organism>
    <name type="scientific">Burkholderia ambifaria (strain MC40-6)</name>
    <dbReference type="NCBI Taxonomy" id="398577"/>
    <lineage>
        <taxon>Bacteria</taxon>
        <taxon>Pseudomonadati</taxon>
        <taxon>Pseudomonadota</taxon>
        <taxon>Betaproteobacteria</taxon>
        <taxon>Burkholderiales</taxon>
        <taxon>Burkholderiaceae</taxon>
        <taxon>Burkholderia</taxon>
        <taxon>Burkholderia cepacia complex</taxon>
    </lineage>
</organism>
<protein>
    <recommendedName>
        <fullName evidence="2">NADH-quinone oxidoreductase subunit B</fullName>
        <ecNumber evidence="2">7.1.1.-</ecNumber>
    </recommendedName>
    <alternativeName>
        <fullName evidence="2">NADH dehydrogenase I subunit B</fullName>
    </alternativeName>
    <alternativeName>
        <fullName evidence="2">NDH-1 subunit B</fullName>
    </alternativeName>
</protein>
<sequence length="159" mass="17560">MSIEGVLKEGFVTTTADKLINWTRTGSLWPMTFGLACCAVEMMHAGAARYDLDRFGVVFRPSPRQSDVMIVAGTLCNKMAPALRRVYDQMAEPRWVISMGSCANGGGYYHYSYSVVRGCDRIVPVDVYVPGCPPTAEALVYGVIQLQAKIRRTNTIARQ</sequence>